<name>SDO1_ARCFU</name>
<dbReference type="EMBL" id="AE000782">
    <property type="protein sequence ID" value="AAB90746.1"/>
    <property type="molecule type" value="Genomic_DNA"/>
</dbReference>
<dbReference type="PIR" id="C69311">
    <property type="entry name" value="C69311"/>
</dbReference>
<dbReference type="RefSeq" id="WP_010877998.1">
    <property type="nucleotide sequence ID" value="NC_000917.1"/>
</dbReference>
<dbReference type="PDB" id="1P9Q">
    <property type="method" value="X-ray"/>
    <property type="resolution" value="2.00 A"/>
    <property type="chains" value="C=1-234"/>
</dbReference>
<dbReference type="PDB" id="1T95">
    <property type="method" value="X-ray"/>
    <property type="resolution" value="1.90 A"/>
    <property type="chains" value="A=2-234"/>
</dbReference>
<dbReference type="PDB" id="6FSW">
    <property type="method" value="X-ray"/>
    <property type="resolution" value="1.90 A"/>
    <property type="chains" value="A=1-234"/>
</dbReference>
<dbReference type="PDBsum" id="1P9Q"/>
<dbReference type="PDBsum" id="1T95"/>
<dbReference type="PDBsum" id="6FSW"/>
<dbReference type="SMR" id="O29759"/>
<dbReference type="STRING" id="224325.AF_0491"/>
<dbReference type="PaxDb" id="224325-AF_0491"/>
<dbReference type="EnsemblBacteria" id="AAB90746">
    <property type="protein sequence ID" value="AAB90746"/>
    <property type="gene ID" value="AF_0491"/>
</dbReference>
<dbReference type="GeneID" id="1483708"/>
<dbReference type="KEGG" id="afu:AF_0491"/>
<dbReference type="eggNOG" id="arCOG04187">
    <property type="taxonomic scope" value="Archaea"/>
</dbReference>
<dbReference type="HOGENOM" id="CLU_043216_2_0_2"/>
<dbReference type="OrthoDB" id="84504at2157"/>
<dbReference type="PhylomeDB" id="O29759"/>
<dbReference type="EvolutionaryTrace" id="O29759"/>
<dbReference type="Proteomes" id="UP000002199">
    <property type="component" value="Chromosome"/>
</dbReference>
<dbReference type="GO" id="GO:0042256">
    <property type="term" value="P:cytosolic ribosome assembly"/>
    <property type="evidence" value="ECO:0007669"/>
    <property type="project" value="InterPro"/>
</dbReference>
<dbReference type="Gene3D" id="3.30.70.240">
    <property type="match status" value="1"/>
</dbReference>
<dbReference type="Gene3D" id="3.30.1250.10">
    <property type="entry name" value="Ribosome maturation protein SBDS, N-terminal domain"/>
    <property type="match status" value="1"/>
</dbReference>
<dbReference type="Gene3D" id="1.10.10.900">
    <property type="entry name" value="SBDS protein C-terminal domain, subdomain 1"/>
    <property type="match status" value="1"/>
</dbReference>
<dbReference type="InterPro" id="IPR035647">
    <property type="entry name" value="EFG_III/V"/>
</dbReference>
<dbReference type="InterPro" id="IPR018023">
    <property type="entry name" value="Ribosome_mat_SBDS_CS"/>
</dbReference>
<dbReference type="InterPro" id="IPR036786">
    <property type="entry name" value="Ribosome_mat_SBDS_N_sf"/>
</dbReference>
<dbReference type="InterPro" id="IPR002140">
    <property type="entry name" value="Sdo1/SBDS"/>
</dbReference>
<dbReference type="InterPro" id="IPR039100">
    <property type="entry name" value="Sdo1/SBDS-like"/>
</dbReference>
<dbReference type="InterPro" id="IPR046928">
    <property type="entry name" value="SDO1/SBDS_C"/>
</dbReference>
<dbReference type="InterPro" id="IPR018978">
    <property type="entry name" value="SDO1/SBDS_central"/>
</dbReference>
<dbReference type="InterPro" id="IPR037188">
    <property type="entry name" value="Sdo1/SBDS_central_sf"/>
</dbReference>
<dbReference type="InterPro" id="IPR019783">
    <property type="entry name" value="SDO1/SBDS_N"/>
</dbReference>
<dbReference type="NCBIfam" id="TIGR00291">
    <property type="entry name" value="RNA_SBDS"/>
    <property type="match status" value="1"/>
</dbReference>
<dbReference type="PANTHER" id="PTHR10927">
    <property type="entry name" value="RIBOSOME MATURATION PROTEIN SBDS"/>
    <property type="match status" value="1"/>
</dbReference>
<dbReference type="PANTHER" id="PTHR10927:SF4">
    <property type="entry name" value="RIBOSOME MATURATION PROTEIN SDO1 HOMOLOG"/>
    <property type="match status" value="1"/>
</dbReference>
<dbReference type="Pfam" id="PF20268">
    <property type="entry name" value="SBDS_C"/>
    <property type="match status" value="1"/>
</dbReference>
<dbReference type="Pfam" id="PF09377">
    <property type="entry name" value="SBDS_domain_II"/>
    <property type="match status" value="1"/>
</dbReference>
<dbReference type="Pfam" id="PF01172">
    <property type="entry name" value="SBDS_N"/>
    <property type="match status" value="1"/>
</dbReference>
<dbReference type="SUPFAM" id="SSF54980">
    <property type="entry name" value="EF-G C-terminal domain-like"/>
    <property type="match status" value="1"/>
</dbReference>
<dbReference type="SUPFAM" id="SSF89895">
    <property type="entry name" value="FYSH domain"/>
    <property type="match status" value="1"/>
</dbReference>
<dbReference type="SUPFAM" id="SSF109728">
    <property type="entry name" value="Hypothetical protein AF0491, middle domain"/>
    <property type="match status" value="1"/>
</dbReference>
<dbReference type="PROSITE" id="PS01267">
    <property type="entry name" value="UPF0023"/>
    <property type="match status" value="1"/>
</dbReference>
<comment type="similarity">
    <text evidence="1">Belongs to the SDO1/SBDS family.</text>
</comment>
<keyword id="KW-0002">3D-structure</keyword>
<keyword id="KW-1185">Reference proteome</keyword>
<sequence>MVSLDKAVIARLRKGGEEFEVLVDPYLARDLKEGKEVNFEDLLAAEEVFKDAKKGERASVDELRKIFGTDDVFEIARKIILEGEVQITAEQRREMLEAKRKQIINFISRNTIDPRTNAPHPPSRIERALEEAKVHIDIFKSVEAQVKDIVKALKPILPLKFEEMEIAIKIPPEHTGRAISALYNFGGVTREEWQRDGSWICVMRIPSGMYGDLMDLLGKVAKGEALTKVLRRIG</sequence>
<accession>O29759</accession>
<reference key="1">
    <citation type="journal article" date="1997" name="Nature">
        <title>The complete genome sequence of the hyperthermophilic, sulphate-reducing archaeon Archaeoglobus fulgidus.</title>
        <authorList>
            <person name="Klenk H.-P."/>
            <person name="Clayton R.A."/>
            <person name="Tomb J.-F."/>
            <person name="White O."/>
            <person name="Nelson K.E."/>
            <person name="Ketchum K.A."/>
            <person name="Dodson R.J."/>
            <person name="Gwinn M.L."/>
            <person name="Hickey E.K."/>
            <person name="Peterson J.D."/>
            <person name="Richardson D.L."/>
            <person name="Kerlavage A.R."/>
            <person name="Graham D.E."/>
            <person name="Kyrpides N.C."/>
            <person name="Fleischmann R.D."/>
            <person name="Quackenbush J."/>
            <person name="Lee N.H."/>
            <person name="Sutton G.G."/>
            <person name="Gill S.R."/>
            <person name="Kirkness E.F."/>
            <person name="Dougherty B.A."/>
            <person name="McKenney K."/>
            <person name="Adams M.D."/>
            <person name="Loftus B.J."/>
            <person name="Peterson S.N."/>
            <person name="Reich C.I."/>
            <person name="McNeil L.K."/>
            <person name="Badger J.H."/>
            <person name="Glodek A."/>
            <person name="Zhou L."/>
            <person name="Overbeek R."/>
            <person name="Gocayne J.D."/>
            <person name="Weidman J.F."/>
            <person name="McDonald L.A."/>
            <person name="Utterback T.R."/>
            <person name="Cotton M.D."/>
            <person name="Spriggs T."/>
            <person name="Artiach P."/>
            <person name="Kaine B.P."/>
            <person name="Sykes S.M."/>
            <person name="Sadow P.W."/>
            <person name="D'Andrea K.P."/>
            <person name="Bowman C."/>
            <person name="Fujii C."/>
            <person name="Garland S.A."/>
            <person name="Mason T.M."/>
            <person name="Olsen G.J."/>
            <person name="Fraser C.M."/>
            <person name="Smith H.O."/>
            <person name="Woese C.R."/>
            <person name="Venter J.C."/>
        </authorList>
    </citation>
    <scope>NUCLEOTIDE SEQUENCE [LARGE SCALE GENOMIC DNA]</scope>
    <source>
        <strain>ATCC 49558 / DSM 4304 / JCM 9628 / NBRC 100126 / VC-16</strain>
    </source>
</reference>
<reference key="2">
    <citation type="journal article" date="2005" name="J. Biol. Chem.">
        <title>The Shwachman-Bodian-Diamond syndrome protein family is involved in RNA metabolism.</title>
        <authorList>
            <person name="Savchenko A."/>
            <person name="Krogan N."/>
            <person name="Cort J.R."/>
            <person name="Evdokimova E."/>
            <person name="Lew J.M."/>
            <person name="Yee A.A."/>
            <person name="Sanchez-Pulido L."/>
            <person name="Andrade M.A."/>
            <person name="Bochkarev A."/>
            <person name="Watson J.D."/>
            <person name="Kennedy M.A."/>
            <person name="Greenblatt J."/>
            <person name="Hughes T."/>
            <person name="Arrowsmith C.H."/>
            <person name="Rommens J.M."/>
            <person name="Edwards A.M."/>
        </authorList>
    </citation>
    <scope>X-RAY CRYSTALLOGRAPHY (2.0 ANGSTROMS)</scope>
</reference>
<reference key="3">
    <citation type="journal article" date="2005" name="J. Biol. Chem.">
        <title>Structural and mutational analysis of the SBDS protein family. Insight into the leukemia-associated Shwachman-Diamond Syndrome.</title>
        <authorList>
            <person name="Shammas C."/>
            <person name="Menne T.F."/>
            <person name="Hilcenko C."/>
            <person name="Michell S.R."/>
            <person name="Goyenechea B."/>
            <person name="Boocock G.R.B."/>
            <person name="Durie P.R."/>
            <person name="Rommens J.M."/>
            <person name="Warren A.J."/>
        </authorList>
    </citation>
    <scope>X-RAY CRYSTALLOGRAPHY (1.9 ANGSTROMS) OF 2-234</scope>
</reference>
<evidence type="ECO:0000305" key="1"/>
<evidence type="ECO:0007829" key="2">
    <source>
        <dbReference type="PDB" id="1T95"/>
    </source>
</evidence>
<evidence type="ECO:0007829" key="3">
    <source>
        <dbReference type="PDB" id="6FSW"/>
    </source>
</evidence>
<protein>
    <recommendedName>
        <fullName>Ribosome maturation protein SDO1 homolog</fullName>
    </recommendedName>
</protein>
<feature type="chain" id="PRO_0000123768" description="Ribosome maturation protein SDO1 homolog">
    <location>
        <begin position="1"/>
        <end position="234"/>
    </location>
</feature>
<feature type="turn" evidence="3">
    <location>
        <begin position="4"/>
        <end position="6"/>
    </location>
</feature>
<feature type="strand" evidence="2">
    <location>
        <begin position="8"/>
        <end position="14"/>
    </location>
</feature>
<feature type="strand" evidence="2">
    <location>
        <begin position="17"/>
        <end position="23"/>
    </location>
</feature>
<feature type="helix" evidence="2">
    <location>
        <begin position="25"/>
        <end position="32"/>
    </location>
</feature>
<feature type="helix" evidence="2">
    <location>
        <begin position="39"/>
        <end position="42"/>
    </location>
</feature>
<feature type="strand" evidence="2">
    <location>
        <begin position="43"/>
        <end position="46"/>
    </location>
</feature>
<feature type="strand" evidence="2">
    <location>
        <begin position="49"/>
        <end position="51"/>
    </location>
</feature>
<feature type="turn" evidence="2">
    <location>
        <begin position="52"/>
        <end position="55"/>
    </location>
</feature>
<feature type="helix" evidence="2">
    <location>
        <begin position="60"/>
        <end position="67"/>
    </location>
</feature>
<feature type="helix" evidence="2">
    <location>
        <begin position="72"/>
        <end position="82"/>
    </location>
</feature>
<feature type="strand" evidence="2">
    <location>
        <begin position="83"/>
        <end position="85"/>
    </location>
</feature>
<feature type="helix" evidence="2">
    <location>
        <begin position="89"/>
        <end position="110"/>
    </location>
</feature>
<feature type="strand" evidence="2">
    <location>
        <begin position="111"/>
        <end position="113"/>
    </location>
</feature>
<feature type="turn" evidence="2">
    <location>
        <begin position="114"/>
        <end position="117"/>
    </location>
</feature>
<feature type="helix" evidence="2">
    <location>
        <begin position="122"/>
        <end position="131"/>
    </location>
</feature>
<feature type="turn" evidence="2">
    <location>
        <begin position="143"/>
        <end position="145"/>
    </location>
</feature>
<feature type="helix" evidence="2">
    <location>
        <begin position="146"/>
        <end position="153"/>
    </location>
</feature>
<feature type="turn" evidence="2">
    <location>
        <begin position="154"/>
        <end position="156"/>
    </location>
</feature>
<feature type="strand" evidence="2">
    <location>
        <begin position="163"/>
        <end position="170"/>
    </location>
</feature>
<feature type="helix" evidence="2">
    <location>
        <begin position="172"/>
        <end position="174"/>
    </location>
</feature>
<feature type="helix" evidence="2">
    <location>
        <begin position="175"/>
        <end position="185"/>
    </location>
</feature>
<feature type="strand" evidence="2">
    <location>
        <begin position="188"/>
        <end position="193"/>
    </location>
</feature>
<feature type="strand" evidence="2">
    <location>
        <begin position="199"/>
        <end position="206"/>
    </location>
</feature>
<feature type="helix" evidence="2">
    <location>
        <begin position="207"/>
        <end position="209"/>
    </location>
</feature>
<feature type="helix" evidence="2">
    <location>
        <begin position="210"/>
        <end position="221"/>
    </location>
</feature>
<feature type="strand" evidence="2">
    <location>
        <begin position="226"/>
        <end position="233"/>
    </location>
</feature>
<gene>
    <name type="ordered locus">AF_0491</name>
</gene>
<proteinExistence type="evidence at protein level"/>
<organism>
    <name type="scientific">Archaeoglobus fulgidus (strain ATCC 49558 / DSM 4304 / JCM 9628 / NBRC 100126 / VC-16)</name>
    <dbReference type="NCBI Taxonomy" id="224325"/>
    <lineage>
        <taxon>Archaea</taxon>
        <taxon>Methanobacteriati</taxon>
        <taxon>Methanobacteriota</taxon>
        <taxon>Archaeoglobi</taxon>
        <taxon>Archaeoglobales</taxon>
        <taxon>Archaeoglobaceae</taxon>
        <taxon>Archaeoglobus</taxon>
    </lineage>
</organism>